<feature type="chain" id="PRO_1000086944" description="NADH-quinone oxidoreductase subunit H">
    <location>
        <begin position="1"/>
        <end position="358"/>
    </location>
</feature>
<feature type="transmembrane region" description="Helical" evidence="1">
    <location>
        <begin position="20"/>
        <end position="40"/>
    </location>
</feature>
<feature type="transmembrane region" description="Helical" evidence="1">
    <location>
        <begin position="95"/>
        <end position="115"/>
    </location>
</feature>
<feature type="transmembrane region" description="Helical" evidence="1">
    <location>
        <begin position="128"/>
        <end position="148"/>
    </location>
</feature>
<feature type="transmembrane region" description="Helical" evidence="1">
    <location>
        <begin position="168"/>
        <end position="188"/>
    </location>
</feature>
<feature type="transmembrane region" description="Helical" evidence="1">
    <location>
        <begin position="206"/>
        <end position="226"/>
    </location>
</feature>
<feature type="transmembrane region" description="Helical" evidence="1">
    <location>
        <begin position="253"/>
        <end position="273"/>
    </location>
</feature>
<feature type="transmembrane region" description="Helical" evidence="1">
    <location>
        <begin position="290"/>
        <end position="310"/>
    </location>
</feature>
<feature type="transmembrane region" description="Helical" evidence="1">
    <location>
        <begin position="334"/>
        <end position="354"/>
    </location>
</feature>
<evidence type="ECO:0000255" key="1">
    <source>
        <dbReference type="HAMAP-Rule" id="MF_01350"/>
    </source>
</evidence>
<dbReference type="EC" id="7.1.1.-" evidence="1"/>
<dbReference type="EMBL" id="CP000381">
    <property type="protein sequence ID" value="ABX74028.1"/>
    <property type="molecule type" value="Genomic_DNA"/>
</dbReference>
<dbReference type="RefSeq" id="WP_012222080.1">
    <property type="nucleotide sequence ID" value="NC_010120.1"/>
</dbReference>
<dbReference type="SMR" id="A9M3D4"/>
<dbReference type="KEGG" id="nmn:NMCC_1897"/>
<dbReference type="HOGENOM" id="CLU_015134_0_1_4"/>
<dbReference type="Proteomes" id="UP000001177">
    <property type="component" value="Chromosome"/>
</dbReference>
<dbReference type="GO" id="GO:0005886">
    <property type="term" value="C:plasma membrane"/>
    <property type="evidence" value="ECO:0007669"/>
    <property type="project" value="UniProtKB-SubCell"/>
</dbReference>
<dbReference type="GO" id="GO:0003954">
    <property type="term" value="F:NADH dehydrogenase activity"/>
    <property type="evidence" value="ECO:0007669"/>
    <property type="project" value="TreeGrafter"/>
</dbReference>
<dbReference type="GO" id="GO:0016655">
    <property type="term" value="F:oxidoreductase activity, acting on NAD(P)H, quinone or similar compound as acceptor"/>
    <property type="evidence" value="ECO:0007669"/>
    <property type="project" value="UniProtKB-UniRule"/>
</dbReference>
<dbReference type="GO" id="GO:0048038">
    <property type="term" value="F:quinone binding"/>
    <property type="evidence" value="ECO:0007669"/>
    <property type="project" value="UniProtKB-KW"/>
</dbReference>
<dbReference type="GO" id="GO:0009060">
    <property type="term" value="P:aerobic respiration"/>
    <property type="evidence" value="ECO:0007669"/>
    <property type="project" value="TreeGrafter"/>
</dbReference>
<dbReference type="HAMAP" id="MF_01350">
    <property type="entry name" value="NDH1_NuoH"/>
    <property type="match status" value="1"/>
</dbReference>
<dbReference type="InterPro" id="IPR001694">
    <property type="entry name" value="NADH_UbQ_OxRdtase_su1/FPO"/>
</dbReference>
<dbReference type="InterPro" id="IPR018086">
    <property type="entry name" value="NADH_UbQ_OxRdtase_su1_CS"/>
</dbReference>
<dbReference type="NCBIfam" id="NF004741">
    <property type="entry name" value="PRK06076.1-2"/>
    <property type="match status" value="1"/>
</dbReference>
<dbReference type="PANTHER" id="PTHR11432">
    <property type="entry name" value="NADH DEHYDROGENASE SUBUNIT 1"/>
    <property type="match status" value="1"/>
</dbReference>
<dbReference type="PANTHER" id="PTHR11432:SF3">
    <property type="entry name" value="NADH-UBIQUINONE OXIDOREDUCTASE CHAIN 1"/>
    <property type="match status" value="1"/>
</dbReference>
<dbReference type="Pfam" id="PF00146">
    <property type="entry name" value="NADHdh"/>
    <property type="match status" value="1"/>
</dbReference>
<dbReference type="PROSITE" id="PS00668">
    <property type="entry name" value="COMPLEX1_ND1_2"/>
    <property type="match status" value="1"/>
</dbReference>
<reference key="1">
    <citation type="journal article" date="2008" name="Genomics">
        <title>Characterization of ST-4821 complex, a unique Neisseria meningitidis clone.</title>
        <authorList>
            <person name="Peng J."/>
            <person name="Yang L."/>
            <person name="Yang F."/>
            <person name="Yang J."/>
            <person name="Yan Y."/>
            <person name="Nie H."/>
            <person name="Zhang X."/>
            <person name="Xiong Z."/>
            <person name="Jiang Y."/>
            <person name="Cheng F."/>
            <person name="Xu X."/>
            <person name="Chen S."/>
            <person name="Sun L."/>
            <person name="Li W."/>
            <person name="Shen Y."/>
            <person name="Shao Z."/>
            <person name="Liang X."/>
            <person name="Xu J."/>
            <person name="Jin Q."/>
        </authorList>
    </citation>
    <scope>NUCLEOTIDE SEQUENCE [LARGE SCALE GENOMIC DNA]</scope>
    <source>
        <strain>053442</strain>
    </source>
</reference>
<protein>
    <recommendedName>
        <fullName evidence="1">NADH-quinone oxidoreductase subunit H</fullName>
        <ecNumber evidence="1">7.1.1.-</ecNumber>
    </recommendedName>
    <alternativeName>
        <fullName evidence="1">NADH dehydrogenase I subunit H</fullName>
    </alternativeName>
    <alternativeName>
        <fullName evidence="1">NDH-1 subunit H</fullName>
    </alternativeName>
</protein>
<organism>
    <name type="scientific">Neisseria meningitidis serogroup C (strain 053442)</name>
    <dbReference type="NCBI Taxonomy" id="374833"/>
    <lineage>
        <taxon>Bacteria</taxon>
        <taxon>Pseudomonadati</taxon>
        <taxon>Pseudomonadota</taxon>
        <taxon>Betaproteobacteria</taxon>
        <taxon>Neisseriales</taxon>
        <taxon>Neisseriaceae</taxon>
        <taxon>Neisseria</taxon>
    </lineage>
</organism>
<keyword id="KW-0997">Cell inner membrane</keyword>
<keyword id="KW-1003">Cell membrane</keyword>
<keyword id="KW-0472">Membrane</keyword>
<keyword id="KW-0520">NAD</keyword>
<keyword id="KW-0874">Quinone</keyword>
<keyword id="KW-1278">Translocase</keyword>
<keyword id="KW-0812">Transmembrane</keyword>
<keyword id="KW-1133">Transmembrane helix</keyword>
<keyword id="KW-0830">Ubiquinone</keyword>
<comment type="function">
    <text evidence="1">NDH-1 shuttles electrons from NADH, via FMN and iron-sulfur (Fe-S) centers, to quinones in the respiratory chain. The immediate electron acceptor for the enzyme in this species is believed to be ubiquinone. Couples the redox reaction to proton translocation (for every two electrons transferred, four hydrogen ions are translocated across the cytoplasmic membrane), and thus conserves the redox energy in a proton gradient. This subunit may bind ubiquinone.</text>
</comment>
<comment type="catalytic activity">
    <reaction evidence="1">
        <text>a quinone + NADH + 5 H(+)(in) = a quinol + NAD(+) + 4 H(+)(out)</text>
        <dbReference type="Rhea" id="RHEA:57888"/>
        <dbReference type="ChEBI" id="CHEBI:15378"/>
        <dbReference type="ChEBI" id="CHEBI:24646"/>
        <dbReference type="ChEBI" id="CHEBI:57540"/>
        <dbReference type="ChEBI" id="CHEBI:57945"/>
        <dbReference type="ChEBI" id="CHEBI:132124"/>
    </reaction>
</comment>
<comment type="subunit">
    <text evidence="1">NDH-1 is composed of 14 different subunits. Subunits NuoA, H, J, K, L, M, N constitute the membrane sector of the complex.</text>
</comment>
<comment type="subcellular location">
    <subcellularLocation>
        <location evidence="1">Cell inner membrane</location>
        <topology evidence="1">Multi-pass membrane protein</topology>
    </subcellularLocation>
</comment>
<comment type="similarity">
    <text evidence="1">Belongs to the complex I subunit 1 family.</text>
</comment>
<sequence>MQEWFQNLFAATLGLGDLGITVGLVVSVIVKIVIILIPLILTVAYLTYFERKVIGFMQLRVGPNVTGPWGLIQPFADVFKLLFKEVTRPRLSNKALFYIGPIMSLAPSFAAWAVIPFNEEWVLTNINIGLLYILMITSLSVYGVIIAGWASNSKYSFLGAMRASAQSISYEIAMSAALVCVVMVSGSMNFSDIVAAQAKGIAGGSVFSWNWLPLFPIFIVYLISAVAETNRAPFDVAEGESEIVAGHHVEYSGFAFALFFLAEYIFMILISALTSLMFLGGWLSPFPQSWGFIGTPSAFWMFVKMAAVLYWYLWIRATFPRYRYDQIMRLGWKVLIPIGFAYIVVLGVWMISPLNLWK</sequence>
<gene>
    <name evidence="1" type="primary">nuoH</name>
    <name type="ordered locus">NMCC_1897</name>
</gene>
<name>NUOH_NEIM0</name>
<accession>A9M3D4</accession>
<proteinExistence type="inferred from homology"/>